<proteinExistence type="evidence at transcript level"/>
<name>RAN2_SOLLC</name>
<organism>
    <name type="scientific">Solanum lycopersicum</name>
    <name type="common">Tomato</name>
    <name type="synonym">Lycopersicon esculentum</name>
    <dbReference type="NCBI Taxonomy" id="4081"/>
    <lineage>
        <taxon>Eukaryota</taxon>
        <taxon>Viridiplantae</taxon>
        <taxon>Streptophyta</taxon>
        <taxon>Embryophyta</taxon>
        <taxon>Tracheophyta</taxon>
        <taxon>Spermatophyta</taxon>
        <taxon>Magnoliopsida</taxon>
        <taxon>eudicotyledons</taxon>
        <taxon>Gunneridae</taxon>
        <taxon>Pentapetalae</taxon>
        <taxon>asterids</taxon>
        <taxon>lamiids</taxon>
        <taxon>Solanales</taxon>
        <taxon>Solanaceae</taxon>
        <taxon>Solanoideae</taxon>
        <taxon>Solaneae</taxon>
        <taxon>Solanum</taxon>
        <taxon>Solanum subgen. Lycopersicon</taxon>
    </lineage>
</organism>
<gene>
    <name type="primary">RAN2</name>
</gene>
<reference key="1">
    <citation type="journal article" date="1994" name="Proc. Natl. Acad. Sci. U.S.A.">
        <title>A small nuclear GTP-binding protein from tomato suppresses a Schizosaccharomyces pombe cell-cycle mutant.</title>
        <authorList>
            <person name="Ach R.A."/>
            <person name="Gruissem W."/>
        </authorList>
    </citation>
    <scope>NUCLEOTIDE SEQUENCE [MRNA]</scope>
    <source>
        <strain>cv. VFNT Cherry LA1221</strain>
    </source>
</reference>
<comment type="function">
    <text evidence="1">GTP-binding protein involved in nucleocytoplasmic transport. Required for the import of protein into the nucleus and also for RNA export. Involved in chromatin condensation and control of cell cycle (By similarity).</text>
</comment>
<comment type="subunit">
    <text evidence="2">Found in a nuclear export complex with RanGTP, exportin and pre-miRNA (By similarity).</text>
</comment>
<comment type="subcellular location">
    <subcellularLocation>
        <location evidence="1">Nucleus</location>
    </subcellularLocation>
</comment>
<comment type="similarity">
    <text evidence="3 4">Belongs to the small GTPase superfamily. Ran family.</text>
</comment>
<feature type="chain" id="PRO_0000208723" description="GTP-binding nuclear protein Ran2">
    <location>
        <begin position="1"/>
        <end position="221"/>
    </location>
</feature>
<feature type="domain" description="Small GTPase Ran-type" evidence="3">
    <location>
        <begin position="10"/>
        <end position="174"/>
    </location>
</feature>
<feature type="region of interest" description="Switch-I" evidence="3">
    <location>
        <begin position="40"/>
        <end position="48"/>
    </location>
</feature>
<feature type="region of interest" description="Switch-II" evidence="3">
    <location>
        <begin position="71"/>
        <end position="87"/>
    </location>
</feature>
<feature type="binding site" evidence="2">
    <location>
        <begin position="21"/>
        <end position="28"/>
    </location>
    <ligand>
        <name>GTP</name>
        <dbReference type="ChEBI" id="CHEBI:37565"/>
    </ligand>
</feature>
<feature type="binding site" evidence="2">
    <location>
        <position position="71"/>
    </location>
    <ligand>
        <name>GTP</name>
        <dbReference type="ChEBI" id="CHEBI:37565"/>
    </ligand>
</feature>
<feature type="binding site" evidence="2">
    <location>
        <begin position="125"/>
        <end position="128"/>
    </location>
    <ligand>
        <name>GTP</name>
        <dbReference type="ChEBI" id="CHEBI:37565"/>
    </ligand>
</feature>
<feature type="binding site" evidence="2">
    <location>
        <begin position="153"/>
        <end position="155"/>
    </location>
    <ligand>
        <name>GTP</name>
        <dbReference type="ChEBI" id="CHEBI:37565"/>
    </ligand>
</feature>
<sequence>MALPNQQTVDYPSFKLVIVGDGGTGKTTFVKRHLTGEFEKKYEPTIGVEVHPLDFFTNCGKIRFYCWDTAGQEKFGGLRDGYYIHGQCAIIMFDVTARLTYKNVPTWHRDLCRVCENIPIVLCGNKVDVKNRQVKAKQVTFHRKKNLQYYEISAKSNYNFEKPFLYLARKLAGDGNLHFVESPALAPPEVQIDLAAQALHEQELQAALNQPLPDDDDEAFE</sequence>
<accession>P38547</accession>
<dbReference type="EMBL" id="L28714">
    <property type="protein sequence ID" value="AAC37403.1"/>
    <property type="molecule type" value="mRNA"/>
</dbReference>
<dbReference type="EMBL" id="L28715">
    <property type="protein sequence ID" value="AAC37404.1"/>
    <property type="molecule type" value="mRNA"/>
</dbReference>
<dbReference type="SMR" id="P38547"/>
<dbReference type="FunCoup" id="P38547">
    <property type="interactions" value="3457"/>
</dbReference>
<dbReference type="STRING" id="4081.P38547"/>
<dbReference type="PaxDb" id="4081-Solyc01g104680.2.1"/>
<dbReference type="KEGG" id="sly:778290"/>
<dbReference type="KEGG" id="sly:778291"/>
<dbReference type="eggNOG" id="KOG0096">
    <property type="taxonomic scope" value="Eukaryota"/>
</dbReference>
<dbReference type="HOGENOM" id="CLU_041217_13_0_1"/>
<dbReference type="InParanoid" id="P38547"/>
<dbReference type="OrthoDB" id="2012850at2759"/>
<dbReference type="PhylomeDB" id="P38547"/>
<dbReference type="Proteomes" id="UP000004994">
    <property type="component" value="Unplaced"/>
</dbReference>
<dbReference type="ExpressionAtlas" id="P38547">
    <property type="expression patterns" value="baseline and differential"/>
</dbReference>
<dbReference type="GO" id="GO:0005737">
    <property type="term" value="C:cytoplasm"/>
    <property type="evidence" value="ECO:0000318"/>
    <property type="project" value="GO_Central"/>
</dbReference>
<dbReference type="GO" id="GO:0005634">
    <property type="term" value="C:nucleus"/>
    <property type="evidence" value="ECO:0000318"/>
    <property type="project" value="GO_Central"/>
</dbReference>
<dbReference type="GO" id="GO:0005525">
    <property type="term" value="F:GTP binding"/>
    <property type="evidence" value="ECO:0007669"/>
    <property type="project" value="UniProtKB-KW"/>
</dbReference>
<dbReference type="GO" id="GO:0003924">
    <property type="term" value="F:GTPase activity"/>
    <property type="evidence" value="ECO:0000318"/>
    <property type="project" value="GO_Central"/>
</dbReference>
<dbReference type="GO" id="GO:0006606">
    <property type="term" value="P:protein import into nucleus"/>
    <property type="evidence" value="ECO:0000318"/>
    <property type="project" value="GO_Central"/>
</dbReference>
<dbReference type="GO" id="GO:0000054">
    <property type="term" value="P:ribosomal subunit export from nucleus"/>
    <property type="evidence" value="ECO:0000318"/>
    <property type="project" value="GO_Central"/>
</dbReference>
<dbReference type="CDD" id="cd00877">
    <property type="entry name" value="Ran"/>
    <property type="match status" value="1"/>
</dbReference>
<dbReference type="FunFam" id="3.40.50.300:FF:000369">
    <property type="entry name" value="GTP-binding nuclear protein"/>
    <property type="match status" value="1"/>
</dbReference>
<dbReference type="Gene3D" id="3.40.50.300">
    <property type="entry name" value="P-loop containing nucleotide triphosphate hydrolases"/>
    <property type="match status" value="1"/>
</dbReference>
<dbReference type="InterPro" id="IPR027417">
    <property type="entry name" value="P-loop_NTPase"/>
</dbReference>
<dbReference type="InterPro" id="IPR002041">
    <property type="entry name" value="Ran_GTPase"/>
</dbReference>
<dbReference type="InterPro" id="IPR005225">
    <property type="entry name" value="Small_GTP-bd"/>
</dbReference>
<dbReference type="InterPro" id="IPR001806">
    <property type="entry name" value="Small_GTPase"/>
</dbReference>
<dbReference type="NCBIfam" id="TIGR00231">
    <property type="entry name" value="small_GTP"/>
    <property type="match status" value="1"/>
</dbReference>
<dbReference type="PANTHER" id="PTHR24071:SF26">
    <property type="entry name" value="GTP-BINDING NUCLEAR PROTEIN RAN-4"/>
    <property type="match status" value="1"/>
</dbReference>
<dbReference type="PANTHER" id="PTHR24071">
    <property type="entry name" value="RAN GTPASE"/>
    <property type="match status" value="1"/>
</dbReference>
<dbReference type="Pfam" id="PF00071">
    <property type="entry name" value="Ras"/>
    <property type="match status" value="1"/>
</dbReference>
<dbReference type="PRINTS" id="PR00627">
    <property type="entry name" value="GTPRANTC4"/>
</dbReference>
<dbReference type="SMART" id="SM00175">
    <property type="entry name" value="RAB"/>
    <property type="match status" value="1"/>
</dbReference>
<dbReference type="SMART" id="SM00176">
    <property type="entry name" value="RAN"/>
    <property type="match status" value="1"/>
</dbReference>
<dbReference type="SMART" id="SM00173">
    <property type="entry name" value="RAS"/>
    <property type="match status" value="1"/>
</dbReference>
<dbReference type="SMART" id="SM00174">
    <property type="entry name" value="RHO"/>
    <property type="match status" value="1"/>
</dbReference>
<dbReference type="SUPFAM" id="SSF52540">
    <property type="entry name" value="P-loop containing nucleoside triphosphate hydrolases"/>
    <property type="match status" value="1"/>
</dbReference>
<dbReference type="PROSITE" id="PS51418">
    <property type="entry name" value="RAN"/>
    <property type="match status" value="1"/>
</dbReference>
<evidence type="ECO:0000250" key="1"/>
<evidence type="ECO:0000250" key="2">
    <source>
        <dbReference type="UniProtKB" id="P62825"/>
    </source>
</evidence>
<evidence type="ECO:0000255" key="3">
    <source>
        <dbReference type="PROSITE-ProRule" id="PRU00752"/>
    </source>
</evidence>
<evidence type="ECO:0000305" key="4"/>
<protein>
    <recommendedName>
        <fullName>GTP-binding nuclear protein Ran2</fullName>
    </recommendedName>
    <alternativeName>
        <fullName>Ras-related nuclear protein 2</fullName>
    </alternativeName>
</protein>
<keyword id="KW-0342">GTP-binding</keyword>
<keyword id="KW-0547">Nucleotide-binding</keyword>
<keyword id="KW-0539">Nucleus</keyword>
<keyword id="KW-0653">Protein transport</keyword>
<keyword id="KW-1185">Reference proteome</keyword>
<keyword id="KW-0813">Transport</keyword>